<gene>
    <name evidence="1" type="primary">truA</name>
    <name type="ordered locus">SDY_2517</name>
</gene>
<name>TRUA_SHIDS</name>
<reference key="1">
    <citation type="journal article" date="2005" name="Nucleic Acids Res.">
        <title>Genome dynamics and diversity of Shigella species, the etiologic agents of bacillary dysentery.</title>
        <authorList>
            <person name="Yang F."/>
            <person name="Yang J."/>
            <person name="Zhang X."/>
            <person name="Chen L."/>
            <person name="Jiang Y."/>
            <person name="Yan Y."/>
            <person name="Tang X."/>
            <person name="Wang J."/>
            <person name="Xiong Z."/>
            <person name="Dong J."/>
            <person name="Xue Y."/>
            <person name="Zhu Y."/>
            <person name="Xu X."/>
            <person name="Sun L."/>
            <person name="Chen S."/>
            <person name="Nie H."/>
            <person name="Peng J."/>
            <person name="Xu J."/>
            <person name="Wang Y."/>
            <person name="Yuan Z."/>
            <person name="Wen Y."/>
            <person name="Yao Z."/>
            <person name="Shen Y."/>
            <person name="Qiang B."/>
            <person name="Hou Y."/>
            <person name="Yu J."/>
            <person name="Jin Q."/>
        </authorList>
    </citation>
    <scope>NUCLEOTIDE SEQUENCE [LARGE SCALE GENOMIC DNA]</scope>
    <source>
        <strain>Sd197</strain>
    </source>
</reference>
<dbReference type="EC" id="5.4.99.12" evidence="1"/>
<dbReference type="EMBL" id="CP000034">
    <property type="protein sequence ID" value="ABB62587.1"/>
    <property type="molecule type" value="Genomic_DNA"/>
</dbReference>
<dbReference type="RefSeq" id="WP_001283590.1">
    <property type="nucleotide sequence ID" value="NC_007606.1"/>
</dbReference>
<dbReference type="RefSeq" id="YP_404078.1">
    <property type="nucleotide sequence ID" value="NC_007606.1"/>
</dbReference>
<dbReference type="SMR" id="Q32DL8"/>
<dbReference type="STRING" id="300267.SDY_2517"/>
<dbReference type="EnsemblBacteria" id="ABB62587">
    <property type="protein sequence ID" value="ABB62587"/>
    <property type="gene ID" value="SDY_2517"/>
</dbReference>
<dbReference type="GeneID" id="75172446"/>
<dbReference type="KEGG" id="sdy:SDY_2517"/>
<dbReference type="PATRIC" id="fig|300267.13.peg.3032"/>
<dbReference type="HOGENOM" id="CLU_014673_0_2_6"/>
<dbReference type="Proteomes" id="UP000002716">
    <property type="component" value="Chromosome"/>
</dbReference>
<dbReference type="GO" id="GO:0003723">
    <property type="term" value="F:RNA binding"/>
    <property type="evidence" value="ECO:0007669"/>
    <property type="project" value="InterPro"/>
</dbReference>
<dbReference type="GO" id="GO:0160147">
    <property type="term" value="F:tRNA pseudouridine(38-40) synthase activity"/>
    <property type="evidence" value="ECO:0007669"/>
    <property type="project" value="UniProtKB-EC"/>
</dbReference>
<dbReference type="GO" id="GO:0031119">
    <property type="term" value="P:tRNA pseudouridine synthesis"/>
    <property type="evidence" value="ECO:0007669"/>
    <property type="project" value="UniProtKB-UniRule"/>
</dbReference>
<dbReference type="CDD" id="cd02570">
    <property type="entry name" value="PseudoU_synth_EcTruA"/>
    <property type="match status" value="1"/>
</dbReference>
<dbReference type="FunFam" id="3.30.70.580:FF:000001">
    <property type="entry name" value="tRNA pseudouridine synthase A"/>
    <property type="match status" value="1"/>
</dbReference>
<dbReference type="FunFam" id="3.30.70.660:FF:000001">
    <property type="entry name" value="tRNA pseudouridine synthase A"/>
    <property type="match status" value="1"/>
</dbReference>
<dbReference type="Gene3D" id="3.30.70.660">
    <property type="entry name" value="Pseudouridine synthase I, catalytic domain, C-terminal subdomain"/>
    <property type="match status" value="1"/>
</dbReference>
<dbReference type="Gene3D" id="3.30.70.580">
    <property type="entry name" value="Pseudouridine synthase I, catalytic domain, N-terminal subdomain"/>
    <property type="match status" value="1"/>
</dbReference>
<dbReference type="HAMAP" id="MF_00171">
    <property type="entry name" value="TruA"/>
    <property type="match status" value="1"/>
</dbReference>
<dbReference type="InterPro" id="IPR020103">
    <property type="entry name" value="PsdUridine_synth_cat_dom_sf"/>
</dbReference>
<dbReference type="InterPro" id="IPR001406">
    <property type="entry name" value="PsdUridine_synth_TruA"/>
</dbReference>
<dbReference type="InterPro" id="IPR020097">
    <property type="entry name" value="PsdUridine_synth_TruA_a/b_dom"/>
</dbReference>
<dbReference type="InterPro" id="IPR020095">
    <property type="entry name" value="PsdUridine_synth_TruA_C"/>
</dbReference>
<dbReference type="InterPro" id="IPR020094">
    <property type="entry name" value="TruA/RsuA/RluB/E/F_N"/>
</dbReference>
<dbReference type="NCBIfam" id="TIGR00071">
    <property type="entry name" value="hisT_truA"/>
    <property type="match status" value="1"/>
</dbReference>
<dbReference type="PANTHER" id="PTHR11142">
    <property type="entry name" value="PSEUDOURIDYLATE SYNTHASE"/>
    <property type="match status" value="1"/>
</dbReference>
<dbReference type="PANTHER" id="PTHR11142:SF0">
    <property type="entry name" value="TRNA PSEUDOURIDINE SYNTHASE-LIKE 1"/>
    <property type="match status" value="1"/>
</dbReference>
<dbReference type="Pfam" id="PF01416">
    <property type="entry name" value="PseudoU_synth_1"/>
    <property type="match status" value="2"/>
</dbReference>
<dbReference type="PIRSF" id="PIRSF001430">
    <property type="entry name" value="tRNA_psdUrid_synth"/>
    <property type="match status" value="1"/>
</dbReference>
<dbReference type="SUPFAM" id="SSF55120">
    <property type="entry name" value="Pseudouridine synthase"/>
    <property type="match status" value="1"/>
</dbReference>
<proteinExistence type="inferred from homology"/>
<evidence type="ECO:0000255" key="1">
    <source>
        <dbReference type="HAMAP-Rule" id="MF_00171"/>
    </source>
</evidence>
<keyword id="KW-0413">Isomerase</keyword>
<keyword id="KW-1185">Reference proteome</keyword>
<keyword id="KW-0819">tRNA processing</keyword>
<feature type="chain" id="PRO_1000017176" description="tRNA pseudouridine synthase A">
    <location>
        <begin position="1"/>
        <end position="270"/>
    </location>
</feature>
<feature type="region of interest" description="RNA binding" evidence="1">
    <location>
        <begin position="107"/>
        <end position="111"/>
    </location>
</feature>
<feature type="region of interest" description="Interaction with tRNA" evidence="1">
    <location>
        <begin position="168"/>
        <end position="172"/>
    </location>
</feature>
<feature type="active site" description="Nucleophile" evidence="1">
    <location>
        <position position="60"/>
    </location>
</feature>
<feature type="binding site" evidence="1">
    <location>
        <position position="118"/>
    </location>
    <ligand>
        <name>substrate</name>
    </ligand>
</feature>
<feature type="site" description="Interaction with tRNA; Important for base-flipping" evidence="1">
    <location>
        <position position="58"/>
    </location>
</feature>
<feature type="site" description="Interaction with tRNA" evidence="1">
    <location>
        <position position="78"/>
    </location>
</feature>
<feature type="site" description="Interaction with tRNA" evidence="1">
    <location>
        <position position="110"/>
    </location>
</feature>
<feature type="site" description="Interaction with tRNA" evidence="1">
    <location>
        <position position="126"/>
    </location>
</feature>
<feature type="site" description="Interaction with tRNA" evidence="1">
    <location>
        <position position="139"/>
    </location>
</feature>
<protein>
    <recommendedName>
        <fullName evidence="1">tRNA pseudouridine synthase A</fullName>
        <ecNumber evidence="1">5.4.99.12</ecNumber>
    </recommendedName>
    <alternativeName>
        <fullName evidence="1">tRNA pseudouridine(38-40) synthase</fullName>
    </alternativeName>
    <alternativeName>
        <fullName evidence="1">tRNA pseudouridylate synthase I</fullName>
    </alternativeName>
    <alternativeName>
        <fullName evidence="1">tRNA-uridine isomerase I</fullName>
    </alternativeName>
</protein>
<sequence>MSDQQQPPVYKIALGIEYDGSKYYGWQRQNEVRSVQEKLEKALSQVANEPITVFCAGRTDAGVHGTGQVVHFETTAQRKDAAWTLGVNANLPGDIAVRWVKAVPDDFHARFSATARRYRYIIYNHRLRPAVLSKGVTHFYEPLDAERMHRAAQCLLGENDFTSFRAVQCQSRTPWRNVMHINVTRHGPYVVVDIKANAFVHHMVRNIVGSLMEVGAHNQPESWIAELLAAKDRTLAAATAKAEGLYLVAVDYPDRYDLPKPPMGPLFLAD</sequence>
<organism>
    <name type="scientific">Shigella dysenteriae serotype 1 (strain Sd197)</name>
    <dbReference type="NCBI Taxonomy" id="300267"/>
    <lineage>
        <taxon>Bacteria</taxon>
        <taxon>Pseudomonadati</taxon>
        <taxon>Pseudomonadota</taxon>
        <taxon>Gammaproteobacteria</taxon>
        <taxon>Enterobacterales</taxon>
        <taxon>Enterobacteriaceae</taxon>
        <taxon>Shigella</taxon>
    </lineage>
</organism>
<accession>Q32DL8</accession>
<comment type="function">
    <text evidence="1">Formation of pseudouridine at positions 38, 39 and 40 in the anticodon stem and loop of transfer RNAs.</text>
</comment>
<comment type="catalytic activity">
    <reaction evidence="1">
        <text>uridine(38/39/40) in tRNA = pseudouridine(38/39/40) in tRNA</text>
        <dbReference type="Rhea" id="RHEA:22376"/>
        <dbReference type="Rhea" id="RHEA-COMP:10085"/>
        <dbReference type="Rhea" id="RHEA-COMP:10087"/>
        <dbReference type="ChEBI" id="CHEBI:65314"/>
        <dbReference type="ChEBI" id="CHEBI:65315"/>
        <dbReference type="EC" id="5.4.99.12"/>
    </reaction>
</comment>
<comment type="subunit">
    <text evidence="1">Homodimer.</text>
</comment>
<comment type="similarity">
    <text evidence="1">Belongs to the tRNA pseudouridine synthase TruA family.</text>
</comment>